<organism>
    <name type="scientific">Mus musculus</name>
    <name type="common">Mouse</name>
    <dbReference type="NCBI Taxonomy" id="10090"/>
    <lineage>
        <taxon>Eukaryota</taxon>
        <taxon>Metazoa</taxon>
        <taxon>Chordata</taxon>
        <taxon>Craniata</taxon>
        <taxon>Vertebrata</taxon>
        <taxon>Euteleostomi</taxon>
        <taxon>Mammalia</taxon>
        <taxon>Eutheria</taxon>
        <taxon>Euarchontoglires</taxon>
        <taxon>Glires</taxon>
        <taxon>Rodentia</taxon>
        <taxon>Myomorpha</taxon>
        <taxon>Muroidea</taxon>
        <taxon>Muridae</taxon>
        <taxon>Murinae</taxon>
        <taxon>Mus</taxon>
        <taxon>Mus</taxon>
    </lineage>
</organism>
<name>CCD87_MOUSE</name>
<keyword id="KW-0175">Coiled coil</keyword>
<keyword id="KW-0221">Differentiation</keyword>
<keyword id="KW-0278">Fertilization</keyword>
<keyword id="KW-1185">Reference proteome</keyword>
<keyword id="KW-0744">Spermatogenesis</keyword>
<feature type="chain" id="PRO_0000295146" description="Coiled-coil domain-containing protein 87">
    <location>
        <begin position="1"/>
        <end position="855"/>
    </location>
</feature>
<feature type="region of interest" description="Disordered" evidence="2">
    <location>
        <begin position="23"/>
        <end position="43"/>
    </location>
</feature>
<feature type="region of interest" description="Disordered" evidence="2">
    <location>
        <begin position="278"/>
        <end position="302"/>
    </location>
</feature>
<feature type="coiled-coil region" evidence="1">
    <location>
        <begin position="387"/>
        <end position="413"/>
    </location>
</feature>
<feature type="coiled-coil region" evidence="1">
    <location>
        <begin position="764"/>
        <end position="789"/>
    </location>
</feature>
<feature type="compositionally biased region" description="Low complexity" evidence="2">
    <location>
        <begin position="287"/>
        <end position="296"/>
    </location>
</feature>
<feature type="sequence conflict" description="In Ref. 1; BAC26655." evidence="4" ref="1">
    <original>P</original>
    <variation>A</variation>
    <location>
        <position position="246"/>
    </location>
</feature>
<feature type="sequence conflict" description="In Ref. 1; BAC26655." evidence="4" ref="1">
    <original>L</original>
    <variation>V</variation>
    <location>
        <position position="694"/>
    </location>
</feature>
<accession>Q8CDL9</accession>
<accession>A6H5W2</accession>
<dbReference type="EMBL" id="AK029877">
    <property type="protein sequence ID" value="BAC26655.1"/>
    <property type="molecule type" value="mRNA"/>
</dbReference>
<dbReference type="EMBL" id="CH466612">
    <property type="protein sequence ID" value="EDL33072.1"/>
    <property type="molecule type" value="Genomic_DNA"/>
</dbReference>
<dbReference type="EMBL" id="BC145660">
    <property type="protein sequence ID" value="AAI45661.1"/>
    <property type="molecule type" value="mRNA"/>
</dbReference>
<dbReference type="CCDS" id="CCDS29439.1"/>
<dbReference type="RefSeq" id="NP_997151.2">
    <property type="nucleotide sequence ID" value="NM_207268.3"/>
</dbReference>
<dbReference type="BioGRID" id="239969">
    <property type="interactions" value="1"/>
</dbReference>
<dbReference type="FunCoup" id="Q8CDL9">
    <property type="interactions" value="28"/>
</dbReference>
<dbReference type="STRING" id="10090.ENSMUSP00000086028"/>
<dbReference type="iPTMnet" id="Q8CDL9"/>
<dbReference type="PhosphoSitePlus" id="Q8CDL9"/>
<dbReference type="SwissPalm" id="Q8CDL9"/>
<dbReference type="PaxDb" id="10090-ENSMUSP00000086028"/>
<dbReference type="ProteomicsDB" id="265601"/>
<dbReference type="Antibodypedia" id="44485">
    <property type="antibodies" value="93 antibodies from 15 providers"/>
</dbReference>
<dbReference type="DNASU" id="399599"/>
<dbReference type="Ensembl" id="ENSMUST00000088653.3">
    <property type="protein sequence ID" value="ENSMUSP00000086028.3"/>
    <property type="gene ID" value="ENSMUSG00000067872.3"/>
</dbReference>
<dbReference type="GeneID" id="399599"/>
<dbReference type="KEGG" id="mmu:399599"/>
<dbReference type="UCSC" id="uc008gbb.1">
    <property type="organism name" value="mouse"/>
</dbReference>
<dbReference type="AGR" id="MGI:3026882"/>
<dbReference type="CTD" id="55231"/>
<dbReference type="MGI" id="MGI:3026882">
    <property type="gene designation" value="Ccdc87"/>
</dbReference>
<dbReference type="VEuPathDB" id="HostDB:ENSMUSG00000067872"/>
<dbReference type="eggNOG" id="ENOG502QQN1">
    <property type="taxonomic scope" value="Eukaryota"/>
</dbReference>
<dbReference type="GeneTree" id="ENSGT00390000018647"/>
<dbReference type="HOGENOM" id="CLU_016540_0_0_1"/>
<dbReference type="InParanoid" id="Q8CDL9"/>
<dbReference type="OMA" id="GEWDWNT"/>
<dbReference type="OrthoDB" id="67750at2759"/>
<dbReference type="PhylomeDB" id="Q8CDL9"/>
<dbReference type="TreeFam" id="TF353429"/>
<dbReference type="BioGRID-ORCS" id="399599">
    <property type="hits" value="1 hit in 76 CRISPR screens"/>
</dbReference>
<dbReference type="PRO" id="PR:Q8CDL9"/>
<dbReference type="Proteomes" id="UP000000589">
    <property type="component" value="Chromosome 19"/>
</dbReference>
<dbReference type="RNAct" id="Q8CDL9">
    <property type="molecule type" value="protein"/>
</dbReference>
<dbReference type="Bgee" id="ENSMUSG00000067872">
    <property type="expression patterns" value="Expressed in spermatid and 36 other cell types or tissues"/>
</dbReference>
<dbReference type="GO" id="GO:0030154">
    <property type="term" value="P:cell differentiation"/>
    <property type="evidence" value="ECO:0007669"/>
    <property type="project" value="UniProtKB-KW"/>
</dbReference>
<dbReference type="GO" id="GO:2000344">
    <property type="term" value="P:positive regulation of acrosome reaction"/>
    <property type="evidence" value="ECO:0000315"/>
    <property type="project" value="UniProtKB"/>
</dbReference>
<dbReference type="GO" id="GO:1905516">
    <property type="term" value="P:positive regulation of fertilization"/>
    <property type="evidence" value="ECO:0000315"/>
    <property type="project" value="UniProtKB"/>
</dbReference>
<dbReference type="GO" id="GO:0007338">
    <property type="term" value="P:single fertilization"/>
    <property type="evidence" value="ECO:0007669"/>
    <property type="project" value="UniProtKB-KW"/>
</dbReference>
<dbReference type="GO" id="GO:0007283">
    <property type="term" value="P:spermatogenesis"/>
    <property type="evidence" value="ECO:0007669"/>
    <property type="project" value="UniProtKB-KW"/>
</dbReference>
<dbReference type="FunFam" id="1.20.58.1520:FF:000003">
    <property type="entry name" value="Coiled-coil domain-containing protein 87"/>
    <property type="match status" value="1"/>
</dbReference>
<dbReference type="Gene3D" id="1.20.58.1520">
    <property type="match status" value="1"/>
</dbReference>
<dbReference type="InterPro" id="IPR037383">
    <property type="entry name" value="CCDC87"/>
</dbReference>
<dbReference type="PANTHER" id="PTHR16078">
    <property type="entry name" value="COILED-COIL DOMAIN-CONTAINING PROTEIN 87"/>
    <property type="match status" value="1"/>
</dbReference>
<dbReference type="PANTHER" id="PTHR16078:SF1">
    <property type="entry name" value="COILED-COIL DOMAIN-CONTAINING PROTEIN 87"/>
    <property type="match status" value="1"/>
</dbReference>
<dbReference type="Pfam" id="PF03999">
    <property type="entry name" value="MAP65_ASE1"/>
    <property type="match status" value="1"/>
</dbReference>
<gene>
    <name type="primary">Ccdc87</name>
</gene>
<proteinExistence type="evidence at protein level"/>
<comment type="function">
    <text evidence="3">Plays a role in spermatogenesis, where it is important for normal sperm head morphology. Also required for the acrosome reaction and thus normal male fertility.</text>
</comment>
<comment type="tissue specificity">
    <text evidence="3">Specifically expressed in testis (at protein level). Not detected in other tissues tested (at protein level). In the testis, localizes to pachytene spermatocytes and spermatids.</text>
</comment>
<comment type="developmental stage">
    <text evidence="3">Detected from postnatal day 14 onwards. Maintained at high levels through to adulthood.</text>
</comment>
<comment type="disruption phenotype">
    <text evidence="3">No gross phenotype. Males have significantly reduced fertility. Testis weight, testis histology and sperm counts are normal. Approximately 25% of sperm have morphological defects in the sperm head and sperm nucleus, while morphology of the sperm flagellum appears normal. Capacitation-induced sperm motility is initially slightly reduced but then recovers. Frequency of both spontaenous and P4-induced acrosome reactions are significantly reduced. In an in-vitro fertilization assay, spermatozoa are able to bind and penetrate the oocyte perivitelline space but fertilizing capacity is severely impaired.</text>
</comment>
<comment type="similarity">
    <text evidence="4">Belongs to the CCDC87 family.</text>
</comment>
<reference key="1">
    <citation type="journal article" date="2005" name="Science">
        <title>The transcriptional landscape of the mammalian genome.</title>
        <authorList>
            <person name="Carninci P."/>
            <person name="Kasukawa T."/>
            <person name="Katayama S."/>
            <person name="Gough J."/>
            <person name="Frith M.C."/>
            <person name="Maeda N."/>
            <person name="Oyama R."/>
            <person name="Ravasi T."/>
            <person name="Lenhard B."/>
            <person name="Wells C."/>
            <person name="Kodzius R."/>
            <person name="Shimokawa K."/>
            <person name="Bajic V.B."/>
            <person name="Brenner S.E."/>
            <person name="Batalov S."/>
            <person name="Forrest A.R."/>
            <person name="Zavolan M."/>
            <person name="Davis M.J."/>
            <person name="Wilming L.G."/>
            <person name="Aidinis V."/>
            <person name="Allen J.E."/>
            <person name="Ambesi-Impiombato A."/>
            <person name="Apweiler R."/>
            <person name="Aturaliya R.N."/>
            <person name="Bailey T.L."/>
            <person name="Bansal M."/>
            <person name="Baxter L."/>
            <person name="Beisel K.W."/>
            <person name="Bersano T."/>
            <person name="Bono H."/>
            <person name="Chalk A.M."/>
            <person name="Chiu K.P."/>
            <person name="Choudhary V."/>
            <person name="Christoffels A."/>
            <person name="Clutterbuck D.R."/>
            <person name="Crowe M.L."/>
            <person name="Dalla E."/>
            <person name="Dalrymple B.P."/>
            <person name="de Bono B."/>
            <person name="Della Gatta G."/>
            <person name="di Bernardo D."/>
            <person name="Down T."/>
            <person name="Engstrom P."/>
            <person name="Fagiolini M."/>
            <person name="Faulkner G."/>
            <person name="Fletcher C.F."/>
            <person name="Fukushima T."/>
            <person name="Furuno M."/>
            <person name="Futaki S."/>
            <person name="Gariboldi M."/>
            <person name="Georgii-Hemming P."/>
            <person name="Gingeras T.R."/>
            <person name="Gojobori T."/>
            <person name="Green R.E."/>
            <person name="Gustincich S."/>
            <person name="Harbers M."/>
            <person name="Hayashi Y."/>
            <person name="Hensch T.K."/>
            <person name="Hirokawa N."/>
            <person name="Hill D."/>
            <person name="Huminiecki L."/>
            <person name="Iacono M."/>
            <person name="Ikeo K."/>
            <person name="Iwama A."/>
            <person name="Ishikawa T."/>
            <person name="Jakt M."/>
            <person name="Kanapin A."/>
            <person name="Katoh M."/>
            <person name="Kawasawa Y."/>
            <person name="Kelso J."/>
            <person name="Kitamura H."/>
            <person name="Kitano H."/>
            <person name="Kollias G."/>
            <person name="Krishnan S.P."/>
            <person name="Kruger A."/>
            <person name="Kummerfeld S.K."/>
            <person name="Kurochkin I.V."/>
            <person name="Lareau L.F."/>
            <person name="Lazarevic D."/>
            <person name="Lipovich L."/>
            <person name="Liu J."/>
            <person name="Liuni S."/>
            <person name="McWilliam S."/>
            <person name="Madan Babu M."/>
            <person name="Madera M."/>
            <person name="Marchionni L."/>
            <person name="Matsuda H."/>
            <person name="Matsuzawa S."/>
            <person name="Miki H."/>
            <person name="Mignone F."/>
            <person name="Miyake S."/>
            <person name="Morris K."/>
            <person name="Mottagui-Tabar S."/>
            <person name="Mulder N."/>
            <person name="Nakano N."/>
            <person name="Nakauchi H."/>
            <person name="Ng P."/>
            <person name="Nilsson R."/>
            <person name="Nishiguchi S."/>
            <person name="Nishikawa S."/>
            <person name="Nori F."/>
            <person name="Ohara O."/>
            <person name="Okazaki Y."/>
            <person name="Orlando V."/>
            <person name="Pang K.C."/>
            <person name="Pavan W.J."/>
            <person name="Pavesi G."/>
            <person name="Pesole G."/>
            <person name="Petrovsky N."/>
            <person name="Piazza S."/>
            <person name="Reed J."/>
            <person name="Reid J.F."/>
            <person name="Ring B.Z."/>
            <person name="Ringwald M."/>
            <person name="Rost B."/>
            <person name="Ruan Y."/>
            <person name="Salzberg S.L."/>
            <person name="Sandelin A."/>
            <person name="Schneider C."/>
            <person name="Schoenbach C."/>
            <person name="Sekiguchi K."/>
            <person name="Semple C.A."/>
            <person name="Seno S."/>
            <person name="Sessa L."/>
            <person name="Sheng Y."/>
            <person name="Shibata Y."/>
            <person name="Shimada H."/>
            <person name="Shimada K."/>
            <person name="Silva D."/>
            <person name="Sinclair B."/>
            <person name="Sperling S."/>
            <person name="Stupka E."/>
            <person name="Sugiura K."/>
            <person name="Sultana R."/>
            <person name="Takenaka Y."/>
            <person name="Taki K."/>
            <person name="Tammoja K."/>
            <person name="Tan S.L."/>
            <person name="Tang S."/>
            <person name="Taylor M.S."/>
            <person name="Tegner J."/>
            <person name="Teichmann S.A."/>
            <person name="Ueda H.R."/>
            <person name="van Nimwegen E."/>
            <person name="Verardo R."/>
            <person name="Wei C.L."/>
            <person name="Yagi K."/>
            <person name="Yamanishi H."/>
            <person name="Zabarovsky E."/>
            <person name="Zhu S."/>
            <person name="Zimmer A."/>
            <person name="Hide W."/>
            <person name="Bult C."/>
            <person name="Grimmond S.M."/>
            <person name="Teasdale R.D."/>
            <person name="Liu E.T."/>
            <person name="Brusic V."/>
            <person name="Quackenbush J."/>
            <person name="Wahlestedt C."/>
            <person name="Mattick J.S."/>
            <person name="Hume D.A."/>
            <person name="Kai C."/>
            <person name="Sasaki D."/>
            <person name="Tomaru Y."/>
            <person name="Fukuda S."/>
            <person name="Kanamori-Katayama M."/>
            <person name="Suzuki M."/>
            <person name="Aoki J."/>
            <person name="Arakawa T."/>
            <person name="Iida J."/>
            <person name="Imamura K."/>
            <person name="Itoh M."/>
            <person name="Kato T."/>
            <person name="Kawaji H."/>
            <person name="Kawagashira N."/>
            <person name="Kawashima T."/>
            <person name="Kojima M."/>
            <person name="Kondo S."/>
            <person name="Konno H."/>
            <person name="Nakano K."/>
            <person name="Ninomiya N."/>
            <person name="Nishio T."/>
            <person name="Okada M."/>
            <person name="Plessy C."/>
            <person name="Shibata K."/>
            <person name="Shiraki T."/>
            <person name="Suzuki S."/>
            <person name="Tagami M."/>
            <person name="Waki K."/>
            <person name="Watahiki A."/>
            <person name="Okamura-Oho Y."/>
            <person name="Suzuki H."/>
            <person name="Kawai J."/>
            <person name="Hayashizaki Y."/>
        </authorList>
    </citation>
    <scope>NUCLEOTIDE SEQUENCE [LARGE SCALE MRNA]</scope>
    <source>
        <strain>C57BL/6J</strain>
        <tissue>Testis</tissue>
    </source>
</reference>
<reference key="2">
    <citation type="submission" date="2005-07" db="EMBL/GenBank/DDBJ databases">
        <authorList>
            <person name="Mural R.J."/>
            <person name="Adams M.D."/>
            <person name="Myers E.W."/>
            <person name="Smith H.O."/>
            <person name="Venter J.C."/>
        </authorList>
    </citation>
    <scope>NUCLEOTIDE SEQUENCE [LARGE SCALE GENOMIC DNA]</scope>
</reference>
<reference key="3">
    <citation type="journal article" date="2004" name="Genome Res.">
        <title>The status, quality, and expansion of the NIH full-length cDNA project: the Mammalian Gene Collection (MGC).</title>
        <authorList>
            <consortium name="The MGC Project Team"/>
        </authorList>
    </citation>
    <scope>NUCLEOTIDE SEQUENCE [LARGE SCALE MRNA]</scope>
    <source>
        <tissue>Brain</tissue>
    </source>
</reference>
<reference key="4">
    <citation type="journal article" date="2018" name="Biol. Reprod.">
        <title>Ccdc87 is critical for sperm function and male fertility.</title>
        <authorList>
            <person name="Wang T."/>
            <person name="Yin Q."/>
            <person name="Ma X."/>
            <person name="Tong M.H."/>
            <person name="Zhou Y."/>
        </authorList>
    </citation>
    <scope>FUNCTION</scope>
    <scope>TISSUE SPECIFICITY</scope>
    <scope>DEVELOPMENTAL STAGE</scope>
    <scope>DISRUPTION PHENOTYPE</scope>
</reference>
<sequence>MEPHSQEPDLKPIYHRLLSPLSLFPSKAKPPPEPPKRPSQDATPLQSIPLAKLKVGPLCRQVSKRLASSGRAARVTAKDRLRLTEVILEELKCNWREPPIEPILDYENNQKLRQRLESYVLISSEQLFVRYLHLLVTLPTSRRVFTESATLSRLAVNLARDCTVFLTSPDVYRCLLADFQTLLNLKHAQGGIVKLRPPPCPPGTFKLCPIPWPHSTGLDHMPCSSLNLNYLVQLSRPYDFPSEPEPDPVEELKSIPQLKSRQQLLWVPSMIKDKEIESRPSPMVPLPSHSPSSESHQFPTSPVHSWLQRGQSMPCLHEGWSLADELCLLPPSPHPLTPLILASESKPLPFRDIVAEDLKQKMKIMRMEWSRYSLLDSGLPPLLGVLTRRLTAQHHLEKLQQMIKSLQEEEASGKWDLQPPRIIPLHPQPVTVALKVHDQVIVQVATVQLSERYFNDSFHVEGAGVLYNHLTGELDGKAIEEMDADRLVGNTTGEVYKELMSRVSVSHLSFEEGDQIEPSADKDWSSYLASSFLHQDKHMPIINRNLVGFYSRRTSTPKPVPEKVPSLTLLPRHKSWDKRPNRHGVWMNWLKPSVSSEDYFKYLSFQESDFLHVIFQMYEKEAPVEVPVPVQEYLDIQQPPPLLQDEELEFMQGKWDWSSVIEDGSGPGRAYIHNLQQRLKRLWVMLEVPEQNRLDMVIKYSSNARLQQLPALIKAWEQVLKPIQKRESLLGRLEWFEQQASDPNRFFQKPDLLMNRLLEENRFRSYLQRKLNRMESNLVSLLERIESVFGEPVTFKGRSYLKKMKQDKVEMLYWLQQQRRIRNLTQAQKTFRQSCTFTGSSSQALVAPGNTPTTH</sequence>
<evidence type="ECO:0000255" key="1"/>
<evidence type="ECO:0000256" key="2">
    <source>
        <dbReference type="SAM" id="MobiDB-lite"/>
    </source>
</evidence>
<evidence type="ECO:0000269" key="3">
    <source>
    </source>
</evidence>
<evidence type="ECO:0000305" key="4"/>
<protein>
    <recommendedName>
        <fullName>Coiled-coil domain-containing protein 87</fullName>
    </recommendedName>
</protein>